<dbReference type="EMBL" id="CP000713">
    <property type="protein sequence ID" value="ABQ93452.1"/>
    <property type="molecule type" value="Genomic_DNA"/>
</dbReference>
<dbReference type="SMR" id="A5WCR1"/>
<dbReference type="STRING" id="349106.PsycPRwf_0497"/>
<dbReference type="KEGG" id="prw:PsycPRwf_0497"/>
<dbReference type="eggNOG" id="COG0792">
    <property type="taxonomic scope" value="Bacteria"/>
</dbReference>
<dbReference type="HOGENOM" id="CLU_115353_3_0_6"/>
<dbReference type="GO" id="GO:0003676">
    <property type="term" value="F:nucleic acid binding"/>
    <property type="evidence" value="ECO:0007669"/>
    <property type="project" value="InterPro"/>
</dbReference>
<dbReference type="Gene3D" id="3.40.1350.10">
    <property type="match status" value="1"/>
</dbReference>
<dbReference type="HAMAP" id="MF_00048">
    <property type="entry name" value="UPF0102"/>
    <property type="match status" value="1"/>
</dbReference>
<dbReference type="InterPro" id="IPR011335">
    <property type="entry name" value="Restrct_endonuc-II-like"/>
</dbReference>
<dbReference type="InterPro" id="IPR011856">
    <property type="entry name" value="tRNA_endonuc-like_dom_sf"/>
</dbReference>
<dbReference type="InterPro" id="IPR003509">
    <property type="entry name" value="UPF0102_YraN-like"/>
</dbReference>
<dbReference type="NCBIfam" id="NF009150">
    <property type="entry name" value="PRK12497.1-3"/>
    <property type="match status" value="1"/>
</dbReference>
<dbReference type="NCBIfam" id="NF011279">
    <property type="entry name" value="PRK14687.1"/>
    <property type="match status" value="1"/>
</dbReference>
<dbReference type="NCBIfam" id="TIGR00252">
    <property type="entry name" value="YraN family protein"/>
    <property type="match status" value="1"/>
</dbReference>
<dbReference type="PANTHER" id="PTHR34039">
    <property type="entry name" value="UPF0102 PROTEIN YRAN"/>
    <property type="match status" value="1"/>
</dbReference>
<dbReference type="PANTHER" id="PTHR34039:SF1">
    <property type="entry name" value="UPF0102 PROTEIN YRAN"/>
    <property type="match status" value="1"/>
</dbReference>
<dbReference type="Pfam" id="PF02021">
    <property type="entry name" value="UPF0102"/>
    <property type="match status" value="1"/>
</dbReference>
<dbReference type="SUPFAM" id="SSF52980">
    <property type="entry name" value="Restriction endonuclease-like"/>
    <property type="match status" value="1"/>
</dbReference>
<gene>
    <name type="ordered locus">PsycPRwf_0497</name>
</gene>
<feature type="chain" id="PRO_0000336240" description="UPF0102 protein PsycPRwf_0497">
    <location>
        <begin position="1"/>
        <end position="142"/>
    </location>
</feature>
<sequence>MPANPELLISPKQRQGGGYEQLAADFLQQQGLRLIARNWQQPKVGEIDLVLIEHGRSWNVLVFAEVRKRKLLGYGDALASITRSKQKKLIKTARYFLRHHPEYADFECRFDVVGFTERTGRSGQGEPLQSEWLQGAFLAPAW</sequence>
<protein>
    <recommendedName>
        <fullName evidence="1">UPF0102 protein PsycPRwf_0497</fullName>
    </recommendedName>
</protein>
<comment type="similarity">
    <text evidence="1">Belongs to the UPF0102 family.</text>
</comment>
<accession>A5WCR1</accession>
<evidence type="ECO:0000255" key="1">
    <source>
        <dbReference type="HAMAP-Rule" id="MF_00048"/>
    </source>
</evidence>
<name>Y497_PSYWF</name>
<proteinExistence type="inferred from homology"/>
<reference key="1">
    <citation type="submission" date="2007-05" db="EMBL/GenBank/DDBJ databases">
        <title>Complete sequence of chromosome of Psychrobacter sp. PRwf-1.</title>
        <authorList>
            <consortium name="US DOE Joint Genome Institute"/>
            <person name="Copeland A."/>
            <person name="Lucas S."/>
            <person name="Lapidus A."/>
            <person name="Barry K."/>
            <person name="Detter J.C."/>
            <person name="Glavina del Rio T."/>
            <person name="Hammon N."/>
            <person name="Israni S."/>
            <person name="Dalin E."/>
            <person name="Tice H."/>
            <person name="Pitluck S."/>
            <person name="Chain P."/>
            <person name="Malfatti S."/>
            <person name="Shin M."/>
            <person name="Vergez L."/>
            <person name="Schmutz J."/>
            <person name="Larimer F."/>
            <person name="Land M."/>
            <person name="Hauser L."/>
            <person name="Kyrpides N."/>
            <person name="Kim E."/>
            <person name="Tiedje J."/>
            <person name="Richardson P."/>
        </authorList>
    </citation>
    <scope>NUCLEOTIDE SEQUENCE [LARGE SCALE GENOMIC DNA]</scope>
    <source>
        <strain>PRwf-1</strain>
    </source>
</reference>
<organism>
    <name type="scientific">Psychrobacter sp. (strain PRwf-1)</name>
    <dbReference type="NCBI Taxonomy" id="349106"/>
    <lineage>
        <taxon>Bacteria</taxon>
        <taxon>Pseudomonadati</taxon>
        <taxon>Pseudomonadota</taxon>
        <taxon>Gammaproteobacteria</taxon>
        <taxon>Moraxellales</taxon>
        <taxon>Moraxellaceae</taxon>
        <taxon>Psychrobacter</taxon>
    </lineage>
</organism>